<organism>
    <name type="scientific">Xenopus laevis</name>
    <name type="common">African clawed frog</name>
    <dbReference type="NCBI Taxonomy" id="8355"/>
    <lineage>
        <taxon>Eukaryota</taxon>
        <taxon>Metazoa</taxon>
        <taxon>Chordata</taxon>
        <taxon>Craniata</taxon>
        <taxon>Vertebrata</taxon>
        <taxon>Euteleostomi</taxon>
        <taxon>Amphibia</taxon>
        <taxon>Batrachia</taxon>
        <taxon>Anura</taxon>
        <taxon>Pipoidea</taxon>
        <taxon>Pipidae</taxon>
        <taxon>Xenopodinae</taxon>
        <taxon>Xenopus</taxon>
        <taxon>Xenopus</taxon>
    </lineage>
</organism>
<accession>P26696</accession>
<accession>Q5D061</accession>
<sequence>MAAAGAASNPGGGPEMVRGQAFDVGPRYINLAYIGEGAYGMVCSAHDNVNKVRVAIKKISPFEHQTYCQRTLREIKILLRFKHENIIGINDIIRAPTIEQMKDVYIVQDLMETDLYKLLKTQHLSNDHICYFLYQILRGLKYIHSANVLHRDLKPSNLLLNTTCDLKICDFGLARVADPDHDHTGFLTEYVATRWYRAPEIMLNSKGYTKSIDIWSVGCILAEMLSNRPIFPGKHYLDQLNHILGILGSPSQEDLNCIINLKARNYLLSLPHKNKVPWNRLFPNADPKALDLLDKMLTFNPHKRIEVEAALAHPYLEQYYDPSDEPVAEAPFKFEMELDDLPKETLKELIFEETARFQPGY</sequence>
<name>MK01_XENLA</name>
<reference key="1">
    <citation type="journal article" date="1991" name="Mol. Cell. Biol.">
        <title>Tyrosine phosphorylation and activation of homologous protein kinases during oocyte maturation and mitogenic activation of fibroblasts.</title>
        <authorList>
            <person name="Posada J."/>
            <person name="Sanghera J."/>
            <person name="Pelech S."/>
            <person name="Aebersold R."/>
            <person name="Cooper J.A."/>
        </authorList>
    </citation>
    <scope>NUCLEOTIDE SEQUENCE [MRNA]</scope>
    <source>
        <tissue>Ovary</tissue>
    </source>
</reference>
<reference key="2">
    <citation type="journal article" date="1991" name="EMBO J.">
        <title>Xenopus M phase MAP kinase: isolation of its cDNA and activation by MPF.</title>
        <authorList>
            <person name="Gotoh Y."/>
            <person name="Moriyama K."/>
            <person name="Matsuda S."/>
            <person name="Okumura E."/>
            <person name="Kishimoto T."/>
            <person name="Kawasaki H."/>
            <person name="Suzuki K."/>
            <person name="Yahara I."/>
            <person name="Sakai H."/>
            <person name="Nishida E."/>
        </authorList>
    </citation>
    <scope>NUCLEOTIDE SEQUENCE [MRNA]</scope>
    <scope>PARTIAL PROTEIN SEQUENCE</scope>
    <scope>FUNCTION</scope>
    <scope>ACTIVITY REGULATION</scope>
    <scope>TISSUE SPECIFICITY</scope>
    <scope>DEVELOPMENTAL STAGE</scope>
    <source>
        <tissue>Oocyte</tissue>
    </source>
</reference>
<reference key="3">
    <citation type="submission" date="2003-11" db="EMBL/GenBank/DDBJ databases">
        <authorList>
            <consortium name="NIH - Xenopus Gene Collection (XGC) project"/>
        </authorList>
    </citation>
    <scope>NUCLEOTIDE SEQUENCE [LARGE SCALE MRNA]</scope>
    <source>
        <tissue>Tail bud</tissue>
    </source>
</reference>
<reference key="4">
    <citation type="journal article" date="1992" name="Science">
        <title>Requirements for phosphorylation of MAP kinase during meiosis in Xenopus oocytes.</title>
        <authorList>
            <person name="Posada J."/>
            <person name="Cooper J.A."/>
        </authorList>
    </citation>
    <scope>PHOSPHORYLATION AT THR-188 AND TYR-190</scope>
    <scope>MUTAGENESIS OF LYS-57; ILE-86; THR-188 AND TYR-190</scope>
    <scope>ACTIVITY REGULATION</scope>
</reference>
<reference key="5">
    <citation type="journal article" date="1997" name="J. Cell Biol.">
        <title>A role for mitogen-activated protein kinase in the spindle assembly checkpoint in XTC cells.</title>
        <authorList>
            <person name="Wang X.M."/>
            <person name="Zhai Y."/>
            <person name="Ferrell J.E. Jr."/>
        </authorList>
    </citation>
    <scope>FUNCTION</scope>
    <scope>SUBCELLULAR LOCATION</scope>
    <scope>ACTIVITY REGULATION</scope>
</reference>
<reference key="6">
    <citation type="journal article" date="2002" name="Mol. Biol. Cell">
        <title>Activation of p42 mitogen-activated protein kinase (MAPK), but not c-Jun NH(2)-terminal kinase, induces phosphorylation and stabilization of MAPK phosphatase XCL100 in Xenopus oocytes.</title>
        <authorList>
            <person name="Sohaskey M.L."/>
            <person name="Ferrell J.E. Jr."/>
        </authorList>
    </citation>
    <scope>FUNCTION</scope>
    <scope>ACTIVITY REGULATION</scope>
</reference>
<reference key="7">
    <citation type="journal article" date="2003" name="Development">
        <title>DOC1R: a MAP kinase substrate that control microtubule organization of metaphase II mouse oocytes.</title>
        <authorList>
            <person name="Terret M.E."/>
            <person name="Lefebvre C."/>
            <person name="Djiane A."/>
            <person name="Rassinier P."/>
            <person name="Moreau J."/>
            <person name="Maro B."/>
            <person name="Verlhac M.H."/>
        </authorList>
    </citation>
    <scope>INTERACTION WITH CDK2AP2</scope>
</reference>
<feature type="chain" id="PRO_0000186250" description="Mitogen-activated protein kinase 1">
    <location>
        <begin position="1"/>
        <end position="361"/>
    </location>
</feature>
<feature type="domain" description="Protein kinase" evidence="2">
    <location>
        <begin position="28"/>
        <end position="316"/>
    </location>
</feature>
<feature type="short sequence motif" description="TXY">
    <location>
        <begin position="188"/>
        <end position="190"/>
    </location>
</feature>
<feature type="active site" description="Proton acceptor" evidence="2 3">
    <location>
        <position position="152"/>
    </location>
</feature>
<feature type="binding site" evidence="2">
    <location>
        <begin position="34"/>
        <end position="42"/>
    </location>
    <ligand>
        <name>ATP</name>
        <dbReference type="ChEBI" id="CHEBI:30616"/>
    </ligand>
</feature>
<feature type="binding site" evidence="9">
    <location>
        <position position="57"/>
    </location>
    <ligand>
        <name>ATP</name>
        <dbReference type="ChEBI" id="CHEBI:30616"/>
    </ligand>
</feature>
<feature type="modified residue" description="Phosphothreonine" evidence="6">
    <location>
        <position position="188"/>
    </location>
</feature>
<feature type="modified residue" description="Phosphotyrosine" evidence="6">
    <location>
        <position position="190"/>
    </location>
</feature>
<feature type="mutagenesis site" description="Inactivation." evidence="6">
    <original>K</original>
    <variation>R</variation>
    <location>
        <position position="57"/>
    </location>
</feature>
<feature type="mutagenesis site" description="Inactivation." evidence="6">
    <original>I</original>
    <variation>Y</variation>
    <location>
        <position position="86"/>
    </location>
</feature>
<feature type="mutagenesis site" description="No effect on Tyr phosphorylation." evidence="6">
    <original>T</original>
    <variation>V</variation>
    <variation>D</variation>
    <location>
        <position position="188"/>
    </location>
</feature>
<feature type="mutagenesis site" description="Affects Thr phosphorylation." evidence="6">
    <original>Y</original>
    <variation>F</variation>
    <location>
        <position position="190"/>
    </location>
</feature>
<feature type="sequence conflict" description="In Ref. 1; AAA50002." evidence="9" ref="1">
    <original>GAA</original>
    <variation>AAS</variation>
    <location>
        <begin position="5"/>
        <end position="7"/>
    </location>
</feature>
<feature type="sequence conflict" description="In Ref. 1; AAA50002." evidence="9" ref="1">
    <original>I</original>
    <variation>T</variation>
    <location>
        <position position="29"/>
    </location>
</feature>
<feature type="sequence conflict" description="In Ref. 1; AAA50002." evidence="9" ref="1">
    <original>A</original>
    <variation>S</variation>
    <location>
        <position position="32"/>
    </location>
</feature>
<feature type="sequence conflict" description="In Ref. 1; AAA50002." evidence="9" ref="1">
    <original>DNV</original>
    <variation>CNI</variation>
    <location>
        <begin position="47"/>
        <end position="49"/>
    </location>
</feature>
<gene>
    <name type="primary">mapk1</name>
    <name type="synonym">mpk1</name>
</gene>
<proteinExistence type="evidence at protein level"/>
<evidence type="ECO:0000250" key="1"/>
<evidence type="ECO:0000255" key="2">
    <source>
        <dbReference type="PROSITE-ProRule" id="PRU00159"/>
    </source>
</evidence>
<evidence type="ECO:0000255" key="3">
    <source>
        <dbReference type="PROSITE-ProRule" id="PRU10027"/>
    </source>
</evidence>
<evidence type="ECO:0000269" key="4">
    <source>
    </source>
</evidence>
<evidence type="ECO:0000269" key="5">
    <source>
    </source>
</evidence>
<evidence type="ECO:0000269" key="6">
    <source>
    </source>
</evidence>
<evidence type="ECO:0000269" key="7">
    <source>
    </source>
</evidence>
<evidence type="ECO:0000269" key="8">
    <source>
    </source>
</evidence>
<evidence type="ECO:0000305" key="9"/>
<protein>
    <recommendedName>
        <fullName>Mitogen-activated protein kinase 1</fullName>
        <shortName>MAP kinase 1</shortName>
        <shortName>MAPK 1</shortName>
        <ecNumber>2.7.11.24</ecNumber>
    </recommendedName>
    <alternativeName>
        <fullName>M phase MAP kinase</fullName>
    </alternativeName>
    <alternativeName>
        <fullName>Myelin basic protein kinase</fullName>
        <shortName>MBP kinase</shortName>
    </alternativeName>
    <alternativeName>
        <fullName>Myelin xP42 protein kinase</fullName>
    </alternativeName>
</protein>
<dbReference type="EC" id="2.7.11.24"/>
<dbReference type="EMBL" id="M60977">
    <property type="protein sequence ID" value="AAA50002.1"/>
    <property type="molecule type" value="mRNA"/>
</dbReference>
<dbReference type="EMBL" id="X59813">
    <property type="protein sequence ID" value="CAA42482.1"/>
    <property type="molecule type" value="mRNA"/>
</dbReference>
<dbReference type="EMBL" id="BC060748">
    <property type="protein sequence ID" value="AAH60748.1"/>
    <property type="molecule type" value="mRNA"/>
</dbReference>
<dbReference type="PIR" id="A39754">
    <property type="entry name" value="A39754"/>
</dbReference>
<dbReference type="SMR" id="P26696"/>
<dbReference type="BioGRID" id="100311">
    <property type="interactions" value="3"/>
</dbReference>
<dbReference type="IntAct" id="P26696">
    <property type="interactions" value="1"/>
</dbReference>
<dbReference type="MINT" id="P26696"/>
<dbReference type="iPTMnet" id="P26696"/>
<dbReference type="DNASU" id="398985"/>
<dbReference type="GeneID" id="398985"/>
<dbReference type="KEGG" id="xla:398985"/>
<dbReference type="CTD" id="398985"/>
<dbReference type="OMA" id="VTHGGQY"/>
<dbReference type="OrthoDB" id="192887at2759"/>
<dbReference type="BRENDA" id="2.7.11.24">
    <property type="organism ID" value="6725"/>
</dbReference>
<dbReference type="Proteomes" id="UP000186698">
    <property type="component" value="Chromosome 1S"/>
</dbReference>
<dbReference type="Bgee" id="398985">
    <property type="expression patterns" value="Expressed in brain and 19 other cell types or tissues"/>
</dbReference>
<dbReference type="GO" id="GO:0005813">
    <property type="term" value="C:centrosome"/>
    <property type="evidence" value="ECO:0007669"/>
    <property type="project" value="UniProtKB-SubCell"/>
</dbReference>
<dbReference type="GO" id="GO:0005737">
    <property type="term" value="C:cytoplasm"/>
    <property type="evidence" value="ECO:0000314"/>
    <property type="project" value="UniProtKB"/>
</dbReference>
<dbReference type="GO" id="GO:0072686">
    <property type="term" value="C:mitotic spindle"/>
    <property type="evidence" value="ECO:0000314"/>
    <property type="project" value="UniProtKB"/>
</dbReference>
<dbReference type="GO" id="GO:0005634">
    <property type="term" value="C:nucleus"/>
    <property type="evidence" value="ECO:0000250"/>
    <property type="project" value="UniProtKB"/>
</dbReference>
<dbReference type="GO" id="GO:0005524">
    <property type="term" value="F:ATP binding"/>
    <property type="evidence" value="ECO:0007669"/>
    <property type="project" value="UniProtKB-KW"/>
</dbReference>
<dbReference type="GO" id="GO:0004707">
    <property type="term" value="F:MAP kinase activity"/>
    <property type="evidence" value="ECO:0007669"/>
    <property type="project" value="UniProtKB-EC"/>
</dbReference>
<dbReference type="GO" id="GO:0106310">
    <property type="term" value="F:protein serine kinase activity"/>
    <property type="evidence" value="ECO:0007669"/>
    <property type="project" value="RHEA"/>
</dbReference>
<dbReference type="GO" id="GO:0004674">
    <property type="term" value="F:protein serine/threonine kinase activity"/>
    <property type="evidence" value="ECO:0000250"/>
    <property type="project" value="UniProtKB"/>
</dbReference>
<dbReference type="GO" id="GO:0006915">
    <property type="term" value="P:apoptotic process"/>
    <property type="evidence" value="ECO:0007669"/>
    <property type="project" value="UniProtKB-KW"/>
</dbReference>
<dbReference type="GO" id="GO:0007166">
    <property type="term" value="P:cell surface receptor signaling pathway"/>
    <property type="evidence" value="ECO:0000318"/>
    <property type="project" value="GO_Central"/>
</dbReference>
<dbReference type="GO" id="GO:0035556">
    <property type="term" value="P:intracellular signal transduction"/>
    <property type="evidence" value="ECO:0000318"/>
    <property type="project" value="GO_Central"/>
</dbReference>
<dbReference type="GO" id="GO:0007094">
    <property type="term" value="P:mitotic spindle assembly checkpoint signaling"/>
    <property type="evidence" value="ECO:0000315"/>
    <property type="project" value="UniProtKB"/>
</dbReference>
<dbReference type="GO" id="GO:0018105">
    <property type="term" value="P:peptidyl-serine phosphorylation"/>
    <property type="evidence" value="ECO:0000250"/>
    <property type="project" value="UniProtKB"/>
</dbReference>
<dbReference type="GO" id="GO:0018107">
    <property type="term" value="P:peptidyl-threonine phosphorylation"/>
    <property type="evidence" value="ECO:0000250"/>
    <property type="project" value="UniProtKB"/>
</dbReference>
<dbReference type="GO" id="GO:0006468">
    <property type="term" value="P:protein phosphorylation"/>
    <property type="evidence" value="ECO:0000250"/>
    <property type="project" value="UniProtKB"/>
</dbReference>
<dbReference type="GO" id="GO:0031647">
    <property type="term" value="P:regulation of protein stability"/>
    <property type="evidence" value="ECO:0000314"/>
    <property type="project" value="UniProtKB"/>
</dbReference>
<dbReference type="GO" id="GO:0070849">
    <property type="term" value="P:response to epidermal growth factor"/>
    <property type="evidence" value="ECO:0000250"/>
    <property type="project" value="UniProtKB"/>
</dbReference>
<dbReference type="CDD" id="cd07849">
    <property type="entry name" value="STKc_ERK1_2_like"/>
    <property type="match status" value="1"/>
</dbReference>
<dbReference type="FunFam" id="1.10.510.10:FF:000624">
    <property type="entry name" value="Mitogen-activated protein kinase"/>
    <property type="match status" value="1"/>
</dbReference>
<dbReference type="FunFam" id="3.30.200.20:FF:000373">
    <property type="entry name" value="Mitogen-activated protein kinase 1"/>
    <property type="match status" value="1"/>
</dbReference>
<dbReference type="Gene3D" id="3.30.200.20">
    <property type="entry name" value="Phosphorylase Kinase, domain 1"/>
    <property type="match status" value="1"/>
</dbReference>
<dbReference type="Gene3D" id="1.10.510.10">
    <property type="entry name" value="Transferase(Phosphotransferase) domain 1"/>
    <property type="match status" value="1"/>
</dbReference>
<dbReference type="InterPro" id="IPR011009">
    <property type="entry name" value="Kinase-like_dom_sf"/>
</dbReference>
<dbReference type="InterPro" id="IPR050117">
    <property type="entry name" value="MAP_kinase"/>
</dbReference>
<dbReference type="InterPro" id="IPR003527">
    <property type="entry name" value="MAP_kinase_CS"/>
</dbReference>
<dbReference type="InterPro" id="IPR008349">
    <property type="entry name" value="MAPK_ERK1/2"/>
</dbReference>
<dbReference type="InterPro" id="IPR000719">
    <property type="entry name" value="Prot_kinase_dom"/>
</dbReference>
<dbReference type="InterPro" id="IPR017441">
    <property type="entry name" value="Protein_kinase_ATP_BS"/>
</dbReference>
<dbReference type="InterPro" id="IPR008271">
    <property type="entry name" value="Ser/Thr_kinase_AS"/>
</dbReference>
<dbReference type="PANTHER" id="PTHR24055">
    <property type="entry name" value="MITOGEN-ACTIVATED PROTEIN KINASE"/>
    <property type="match status" value="1"/>
</dbReference>
<dbReference type="Pfam" id="PF00069">
    <property type="entry name" value="Pkinase"/>
    <property type="match status" value="1"/>
</dbReference>
<dbReference type="PRINTS" id="PR01770">
    <property type="entry name" value="ERK1ERK2MAPK"/>
</dbReference>
<dbReference type="SMART" id="SM00220">
    <property type="entry name" value="S_TKc"/>
    <property type="match status" value="1"/>
</dbReference>
<dbReference type="SUPFAM" id="SSF56112">
    <property type="entry name" value="Protein kinase-like (PK-like)"/>
    <property type="match status" value="1"/>
</dbReference>
<dbReference type="PROSITE" id="PS01351">
    <property type="entry name" value="MAPK"/>
    <property type="match status" value="1"/>
</dbReference>
<dbReference type="PROSITE" id="PS00107">
    <property type="entry name" value="PROTEIN_KINASE_ATP"/>
    <property type="match status" value="1"/>
</dbReference>
<dbReference type="PROSITE" id="PS50011">
    <property type="entry name" value="PROTEIN_KINASE_DOM"/>
    <property type="match status" value="1"/>
</dbReference>
<dbReference type="PROSITE" id="PS00108">
    <property type="entry name" value="PROTEIN_KINASE_ST"/>
    <property type="match status" value="1"/>
</dbReference>
<comment type="function">
    <text evidence="4 7 8">Serine/threonine kinase which acts as an essential component of the MAP kinase signal transduction pathway. Plays an important role in the MAPK/ERK cascade. Depending on the cellular context, this cascade mediates diverse biological functions such as cell growth, adhesion, survival and differentiation through the regulation of transcription, translation, cytoskeletal rearrangements. The MAPK/ERK cascade also plays a role in initiation and regulation of meiosis, mitosis, and postmitotic functions in differentiated cells by phosphorylating a number of transcription factors. Many of the substrates are localized in the nucleus, and seem to participate in the regulation of transcription upon stimulation. However, other substrates are found in the cytosol as well as in other cellular organelles, and those are responsible for processes such as translation, mitosis and apoptosis. Moreover, the MAPK/ERK cascade is also involved in the regulation of the endosomal dynamics, including lysosome processing and endosome cycling through the perinuclear recycling compartment (PNRC); as well as in the fragmentation of the Golgi apparatus during mitosis. Phosphorylates microtubule-associated protein 2 (MAP2), myelin basic protein (MBP) and Elk-1. Phosphorylates dual specificity protein phosphatase 1 (DUSP1) during meiosis, increasing its stability. Activated by M phase promoting factor (MPF). Plays a role in the spindle assembly checkpoint.</text>
</comment>
<comment type="catalytic activity">
    <reaction>
        <text>L-seryl-[protein] + ATP = O-phospho-L-seryl-[protein] + ADP + H(+)</text>
        <dbReference type="Rhea" id="RHEA:17989"/>
        <dbReference type="Rhea" id="RHEA-COMP:9863"/>
        <dbReference type="Rhea" id="RHEA-COMP:11604"/>
        <dbReference type="ChEBI" id="CHEBI:15378"/>
        <dbReference type="ChEBI" id="CHEBI:29999"/>
        <dbReference type="ChEBI" id="CHEBI:30616"/>
        <dbReference type="ChEBI" id="CHEBI:83421"/>
        <dbReference type="ChEBI" id="CHEBI:456216"/>
        <dbReference type="EC" id="2.7.11.24"/>
    </reaction>
</comment>
<comment type="catalytic activity">
    <reaction>
        <text>L-threonyl-[protein] + ATP = O-phospho-L-threonyl-[protein] + ADP + H(+)</text>
        <dbReference type="Rhea" id="RHEA:46608"/>
        <dbReference type="Rhea" id="RHEA-COMP:11060"/>
        <dbReference type="Rhea" id="RHEA-COMP:11605"/>
        <dbReference type="ChEBI" id="CHEBI:15378"/>
        <dbReference type="ChEBI" id="CHEBI:30013"/>
        <dbReference type="ChEBI" id="CHEBI:30616"/>
        <dbReference type="ChEBI" id="CHEBI:61977"/>
        <dbReference type="ChEBI" id="CHEBI:456216"/>
        <dbReference type="EC" id="2.7.11.24"/>
    </reaction>
</comment>
<comment type="cofactor">
    <cofactor evidence="1">
        <name>Mg(2+)</name>
        <dbReference type="ChEBI" id="CHEBI:18420"/>
    </cofactor>
</comment>
<comment type="activity regulation">
    <text evidence="4 6 7 8">Activated by tyrosine phosphorylation during the M phase of the meiotic cell cycle. Dephosphorylated and inactivated by DUSP1.</text>
</comment>
<comment type="subunit">
    <text evidence="5">Interacts with CDK2AP2 (PubMed:12944431).</text>
</comment>
<comment type="subcellular location">
    <subcellularLocation>
        <location evidence="1">Cytoplasm</location>
        <location evidence="1">Cytoskeleton</location>
        <location evidence="1">Microtubule organizing center</location>
        <location evidence="1">Centrosome</location>
    </subcellularLocation>
    <subcellularLocation>
        <location evidence="8">Cytoplasm</location>
    </subcellularLocation>
    <subcellularLocation>
        <location evidence="8">Cytoplasm</location>
        <location evidence="8">Cytoskeleton</location>
        <location evidence="8">Spindle</location>
    </subcellularLocation>
    <text>Associated with the spindle during prometaphase and metaphase in cultured XTC cells.</text>
</comment>
<comment type="tissue specificity">
    <text evidence="7">Expressed in the central nervous system, kidney, liver, intestine and the hematopoietic system. Also found in heart, muscle, pancreas and lung.</text>
</comment>
<comment type="developmental stage">
    <text evidence="7">Is expressed in the early oocyte and is maintained at a constant level during embryogenesis. Its level declines at the mid-blastula transition.</text>
</comment>
<comment type="domain">
    <text>The TXY motif contains the threonine and tyrosine residues whose phosphorylation activates the MAP kinases.</text>
</comment>
<comment type="PTM">
    <text evidence="6">Dually phosphorylated on Thr-188 and Tyr-190, which activates the enzyme.</text>
</comment>
<comment type="similarity">
    <text evidence="9">Belongs to the protein kinase superfamily. CMGC Ser/Thr protein kinase family. MAP kinase subfamily.</text>
</comment>
<keyword id="KW-0053">Apoptosis</keyword>
<keyword id="KW-0067">ATP-binding</keyword>
<keyword id="KW-0131">Cell cycle</keyword>
<keyword id="KW-0963">Cytoplasm</keyword>
<keyword id="KW-0206">Cytoskeleton</keyword>
<keyword id="KW-0903">Direct protein sequencing</keyword>
<keyword id="KW-0418">Kinase</keyword>
<keyword id="KW-0547">Nucleotide-binding</keyword>
<keyword id="KW-0597">Phosphoprotein</keyword>
<keyword id="KW-1185">Reference proteome</keyword>
<keyword id="KW-0723">Serine/threonine-protein kinase</keyword>
<keyword id="KW-0808">Transferase</keyword>